<comment type="subcellular location">
    <subcellularLocation>
        <location evidence="1">Nucleus</location>
    </subcellularLocation>
</comment>
<comment type="tissue specificity">
    <text evidence="2">Expressed in leaf blades, leaf sheaths and flowers.</text>
</comment>
<comment type="similarity">
    <text evidence="3">Belongs to the YABBY family.</text>
</comment>
<proteinExistence type="evidence at transcript level"/>
<evidence type="ECO:0000250" key="1"/>
<evidence type="ECO:0000269" key="2">
    <source>
    </source>
</evidence>
<evidence type="ECO:0000305" key="3"/>
<feature type="chain" id="PRO_0000308700" description="Protein YABBY 6">
    <location>
        <begin position="1"/>
        <end position="207"/>
    </location>
</feature>
<feature type="zinc finger region" description="C4-type">
    <location>
        <begin position="16"/>
        <end position="43"/>
    </location>
</feature>
<dbReference type="EMBL" id="AB274018">
    <property type="protein sequence ID" value="BAF45807.1"/>
    <property type="molecule type" value="mRNA"/>
</dbReference>
<dbReference type="EMBL" id="DP000011">
    <property type="protein sequence ID" value="ABA99903.1"/>
    <property type="molecule type" value="Genomic_DNA"/>
</dbReference>
<dbReference type="EMBL" id="AP008218">
    <property type="protein sequence ID" value="BAF30318.1"/>
    <property type="molecule type" value="Genomic_DNA"/>
</dbReference>
<dbReference type="EMBL" id="AP014968">
    <property type="protein sequence ID" value="BAT18137.1"/>
    <property type="molecule type" value="Genomic_DNA"/>
</dbReference>
<dbReference type="RefSeq" id="XP_015618575.1">
    <property type="nucleotide sequence ID" value="XM_015763089.1"/>
</dbReference>
<dbReference type="SMR" id="Q2QM17"/>
<dbReference type="FunCoup" id="Q2QM17">
    <property type="interactions" value="711"/>
</dbReference>
<dbReference type="PaxDb" id="39947-Q2QM17"/>
<dbReference type="EnsemblPlants" id="Os12t0621100-01">
    <property type="protein sequence ID" value="Os12t0621100-01"/>
    <property type="gene ID" value="Os12g0621100"/>
</dbReference>
<dbReference type="EnsemblPlants" id="Os12t0621100-02">
    <property type="protein sequence ID" value="Os12t0621100-02"/>
    <property type="gene ID" value="Os12g0621100"/>
</dbReference>
<dbReference type="Gramene" id="Os12t0621100-01">
    <property type="protein sequence ID" value="Os12t0621100-01"/>
    <property type="gene ID" value="Os12g0621100"/>
</dbReference>
<dbReference type="Gramene" id="Os12t0621100-02">
    <property type="protein sequence ID" value="Os12t0621100-02"/>
    <property type="gene ID" value="Os12g0621100"/>
</dbReference>
<dbReference type="KEGG" id="dosa:Os12g0621100"/>
<dbReference type="eggNOG" id="ENOG502R9GD">
    <property type="taxonomic scope" value="Eukaryota"/>
</dbReference>
<dbReference type="HOGENOM" id="CLU_071156_0_1_1"/>
<dbReference type="InParanoid" id="Q2QM17"/>
<dbReference type="OMA" id="TKVISCM"/>
<dbReference type="OrthoDB" id="667577at2759"/>
<dbReference type="PlantReactome" id="R-OSA-9826782">
    <property type="pathway name" value="Regulation of seed germination and coleoptile growth under submergence and normal gravity environment"/>
</dbReference>
<dbReference type="Proteomes" id="UP000000763">
    <property type="component" value="Chromosome 12"/>
</dbReference>
<dbReference type="Proteomes" id="UP000059680">
    <property type="component" value="Chromosome 12"/>
</dbReference>
<dbReference type="ExpressionAtlas" id="Q2QM17">
    <property type="expression patterns" value="baseline and differential"/>
</dbReference>
<dbReference type="GO" id="GO:0005634">
    <property type="term" value="C:nucleus"/>
    <property type="evidence" value="ECO:0000318"/>
    <property type="project" value="GO_Central"/>
</dbReference>
<dbReference type="GO" id="GO:0008270">
    <property type="term" value="F:zinc ion binding"/>
    <property type="evidence" value="ECO:0007669"/>
    <property type="project" value="UniProtKB-KW"/>
</dbReference>
<dbReference type="GO" id="GO:0010158">
    <property type="term" value="P:abaxial cell fate specification"/>
    <property type="evidence" value="ECO:0000318"/>
    <property type="project" value="GO_Central"/>
</dbReference>
<dbReference type="GO" id="GO:0045165">
    <property type="term" value="P:cell fate commitment"/>
    <property type="evidence" value="ECO:0000318"/>
    <property type="project" value="GO_Central"/>
</dbReference>
<dbReference type="CDD" id="cd00084">
    <property type="entry name" value="HMG-box_SF"/>
    <property type="match status" value="1"/>
</dbReference>
<dbReference type="FunFam" id="1.10.30.10:FF:000012">
    <property type="entry name" value="axial regulator YABBY 5-like"/>
    <property type="match status" value="1"/>
</dbReference>
<dbReference type="Gene3D" id="1.10.30.10">
    <property type="entry name" value="High mobility group box domain"/>
    <property type="match status" value="1"/>
</dbReference>
<dbReference type="InterPro" id="IPR036910">
    <property type="entry name" value="HMG_box_dom_sf"/>
</dbReference>
<dbReference type="InterPro" id="IPR006780">
    <property type="entry name" value="YABBY"/>
</dbReference>
<dbReference type="InterPro" id="IPR056775">
    <property type="entry name" value="YABBY_C"/>
</dbReference>
<dbReference type="InterPro" id="IPR056776">
    <property type="entry name" value="YABBY_N"/>
</dbReference>
<dbReference type="PANTHER" id="PTHR31675:SF30">
    <property type="entry name" value="AXIAL REGULATOR YABBY 2-RELATED"/>
    <property type="match status" value="1"/>
</dbReference>
<dbReference type="PANTHER" id="PTHR31675">
    <property type="entry name" value="PROTEIN YABBY 6-RELATED"/>
    <property type="match status" value="1"/>
</dbReference>
<dbReference type="Pfam" id="PF04690">
    <property type="entry name" value="YABBY"/>
    <property type="match status" value="1"/>
</dbReference>
<dbReference type="Pfam" id="PF24868">
    <property type="entry name" value="YABBY_N"/>
    <property type="match status" value="1"/>
</dbReference>
<dbReference type="SUPFAM" id="SSF47095">
    <property type="entry name" value="HMG-box"/>
    <property type="match status" value="1"/>
</dbReference>
<protein>
    <recommendedName>
        <fullName>Protein YABBY 6</fullName>
    </recommendedName>
    <alternativeName>
        <fullName>OsYAB5</fullName>
    </alternativeName>
    <alternativeName>
        <fullName>OsYABBY6</fullName>
    </alternativeName>
</protein>
<keyword id="KW-0479">Metal-binding</keyword>
<keyword id="KW-0539">Nucleus</keyword>
<keyword id="KW-1185">Reference proteome</keyword>
<keyword id="KW-0862">Zinc</keyword>
<keyword id="KW-0863">Zinc-finger</keyword>
<reference key="1">
    <citation type="journal article" date="2007" name="Mol. Genet. Genomics">
        <title>Molecular characterization the YABBY gene family in Oryza sativa and expression analysis of OsYABBY1.</title>
        <authorList>
            <person name="Toriba T."/>
            <person name="Harada K."/>
            <person name="Takamura A."/>
            <person name="Nakamura H."/>
            <person name="Ichikawa H."/>
            <person name="Suzaki T."/>
            <person name="Hirano H.-Y."/>
        </authorList>
    </citation>
    <scope>NUCLEOTIDE SEQUENCE [MRNA]</scope>
    <scope>TISSUE SPECIFICITY</scope>
    <scope>GENE FAMILY</scope>
    <scope>NOMENCLATURE</scope>
    <source>
        <strain>cv. Nipponbare</strain>
    </source>
</reference>
<reference key="2">
    <citation type="journal article" date="2005" name="BMC Biol.">
        <title>The sequence of rice chromosomes 11 and 12, rich in disease resistance genes and recent gene duplications.</title>
        <authorList>
            <consortium name="The rice chromosomes 11 and 12 sequencing consortia"/>
        </authorList>
    </citation>
    <scope>NUCLEOTIDE SEQUENCE [LARGE SCALE GENOMIC DNA]</scope>
    <source>
        <strain>cv. Nipponbare</strain>
    </source>
</reference>
<reference key="3">
    <citation type="journal article" date="2005" name="Nature">
        <title>The map-based sequence of the rice genome.</title>
        <authorList>
            <consortium name="International rice genome sequencing project (IRGSP)"/>
        </authorList>
    </citation>
    <scope>NUCLEOTIDE SEQUENCE [LARGE SCALE GENOMIC DNA]</scope>
    <source>
        <strain>cv. Nipponbare</strain>
    </source>
</reference>
<reference key="4">
    <citation type="journal article" date="2008" name="Nucleic Acids Res.">
        <title>The rice annotation project database (RAP-DB): 2008 update.</title>
        <authorList>
            <consortium name="The rice annotation project (RAP)"/>
        </authorList>
    </citation>
    <scope>GENOME REANNOTATION</scope>
    <source>
        <strain>cv. Nipponbare</strain>
    </source>
</reference>
<reference key="5">
    <citation type="journal article" date="2013" name="Rice">
        <title>Improvement of the Oryza sativa Nipponbare reference genome using next generation sequence and optical map data.</title>
        <authorList>
            <person name="Kawahara Y."/>
            <person name="de la Bastide M."/>
            <person name="Hamilton J.P."/>
            <person name="Kanamori H."/>
            <person name="McCombie W.R."/>
            <person name="Ouyang S."/>
            <person name="Schwartz D.C."/>
            <person name="Tanaka T."/>
            <person name="Wu J."/>
            <person name="Zhou S."/>
            <person name="Childs K.L."/>
            <person name="Davidson R.M."/>
            <person name="Lin H."/>
            <person name="Quesada-Ocampo L."/>
            <person name="Vaillancourt B."/>
            <person name="Sakai H."/>
            <person name="Lee S.S."/>
            <person name="Kim J."/>
            <person name="Numa H."/>
            <person name="Itoh T."/>
            <person name="Buell C.R."/>
            <person name="Matsumoto T."/>
        </authorList>
    </citation>
    <scope>GENOME REANNOTATION</scope>
    <source>
        <strain>cv. Nipponbare</strain>
    </source>
</reference>
<gene>
    <name type="primary">YAB6</name>
    <name type="ordered locus">Os12g0621100</name>
    <name type="ordered locus">LOC_Os12g42610</name>
</gene>
<organism>
    <name type="scientific">Oryza sativa subsp. japonica</name>
    <name type="common">Rice</name>
    <dbReference type="NCBI Taxonomy" id="39947"/>
    <lineage>
        <taxon>Eukaryota</taxon>
        <taxon>Viridiplantae</taxon>
        <taxon>Streptophyta</taxon>
        <taxon>Embryophyta</taxon>
        <taxon>Tracheophyta</taxon>
        <taxon>Spermatophyta</taxon>
        <taxon>Magnoliopsida</taxon>
        <taxon>Liliopsida</taxon>
        <taxon>Poales</taxon>
        <taxon>Poaceae</taxon>
        <taxon>BOP clade</taxon>
        <taxon>Oryzoideae</taxon>
        <taxon>Oryzeae</taxon>
        <taxon>Oryzinae</taxon>
        <taxon>Oryza</taxon>
        <taxon>Oryza sativa</taxon>
    </lineage>
</organism>
<sequence length="207" mass="22778">MSAQIAPAEQVCYVHCNFCNTILAVSVPGNSMLNIVTVRCGHCTNLLSVNLRGLMHSAPALQDHHHHHLQESGLSGCFRDQSGYPEFGFSAASSSSKLRLPPAAAAMVSYSQQNQQLEQALHARPPEKRQRVPSAYNRFIKEEIRRIKANNPDISHREAFSTAAKNWAHYPNIHFGLSPGHEGGKKLVDVDPIPTAPSSKKIQGFYS</sequence>
<accession>Q2QM17</accession>
<name>YAB6_ORYSJ</name>